<comment type="function">
    <text evidence="1">Transforms N(2)-succinylglutamate into succinate and glutamate.</text>
</comment>
<comment type="catalytic activity">
    <reaction evidence="1">
        <text>N-succinyl-L-glutamate + H2O = L-glutamate + succinate</text>
        <dbReference type="Rhea" id="RHEA:15169"/>
        <dbReference type="ChEBI" id="CHEBI:15377"/>
        <dbReference type="ChEBI" id="CHEBI:29985"/>
        <dbReference type="ChEBI" id="CHEBI:30031"/>
        <dbReference type="ChEBI" id="CHEBI:58763"/>
        <dbReference type="EC" id="3.5.1.96"/>
    </reaction>
</comment>
<comment type="cofactor">
    <cofactor evidence="1">
        <name>Zn(2+)</name>
        <dbReference type="ChEBI" id="CHEBI:29105"/>
    </cofactor>
    <text evidence="1">Binds 1 zinc ion per subunit.</text>
</comment>
<comment type="pathway">
    <text evidence="1">Amino-acid degradation; L-arginine degradation via AST pathway; L-glutamate and succinate from L-arginine: step 5/5.</text>
</comment>
<comment type="similarity">
    <text evidence="1">Belongs to the AspA/AstE family. Succinylglutamate desuccinylase subfamily.</text>
</comment>
<evidence type="ECO:0000255" key="1">
    <source>
        <dbReference type="HAMAP-Rule" id="MF_00767"/>
    </source>
</evidence>
<sequence>MDNFLALTLTSKKPVITEREINGVRWRWLGDGVLELTPLTPPQGALVISAGIHGNETAPVEMLDALLGAISHGEIPLRWRLLVILGNPPALKQGKRYCHSDMNRMFGGRWQLFAESGETCRARELEQCLEDFYDQGKESVRWHLDLHTAIRGSLHPQFGVLPQRDIPWDEKFLTWLGAAGLEALVFHQEPGGTFTHFSARHFGALACTLELGKALPFGQNDLRQFAVTASAIAALLSGESVGIVRTPPLRYRVVSQITRHSPSFEMHMASDTLNFMPFKKGTLLAQDGEERFTVTHDVEYVLFPNPLVALGLRAGLMLEKIS</sequence>
<reference key="1">
    <citation type="journal article" date="2001" name="Nature">
        <title>Genome sequence of enterohaemorrhagic Escherichia coli O157:H7.</title>
        <authorList>
            <person name="Perna N.T."/>
            <person name="Plunkett G. III"/>
            <person name="Burland V."/>
            <person name="Mau B."/>
            <person name="Glasner J.D."/>
            <person name="Rose D.J."/>
            <person name="Mayhew G.F."/>
            <person name="Evans P.S."/>
            <person name="Gregor J."/>
            <person name="Kirkpatrick H.A."/>
            <person name="Posfai G."/>
            <person name="Hackett J."/>
            <person name="Klink S."/>
            <person name="Boutin A."/>
            <person name="Shao Y."/>
            <person name="Miller L."/>
            <person name="Grotbeck E.J."/>
            <person name="Davis N.W."/>
            <person name="Lim A."/>
            <person name="Dimalanta E.T."/>
            <person name="Potamousis K."/>
            <person name="Apodaca J."/>
            <person name="Anantharaman T.S."/>
            <person name="Lin J."/>
            <person name="Yen G."/>
            <person name="Schwartz D.C."/>
            <person name="Welch R.A."/>
            <person name="Blattner F.R."/>
        </authorList>
    </citation>
    <scope>NUCLEOTIDE SEQUENCE [LARGE SCALE GENOMIC DNA]</scope>
    <source>
        <strain>O157:H7 / EDL933 / ATCC 700927 / EHEC</strain>
    </source>
</reference>
<reference key="2">
    <citation type="journal article" date="2001" name="DNA Res.">
        <title>Complete genome sequence of enterohemorrhagic Escherichia coli O157:H7 and genomic comparison with a laboratory strain K-12.</title>
        <authorList>
            <person name="Hayashi T."/>
            <person name="Makino K."/>
            <person name="Ohnishi M."/>
            <person name="Kurokawa K."/>
            <person name="Ishii K."/>
            <person name="Yokoyama K."/>
            <person name="Han C.-G."/>
            <person name="Ohtsubo E."/>
            <person name="Nakayama K."/>
            <person name="Murata T."/>
            <person name="Tanaka M."/>
            <person name="Tobe T."/>
            <person name="Iida T."/>
            <person name="Takami H."/>
            <person name="Honda T."/>
            <person name="Sasakawa C."/>
            <person name="Ogasawara N."/>
            <person name="Yasunaga T."/>
            <person name="Kuhara S."/>
            <person name="Shiba T."/>
            <person name="Hattori M."/>
            <person name="Shinagawa H."/>
        </authorList>
    </citation>
    <scope>NUCLEOTIDE SEQUENCE [LARGE SCALE GENOMIC DNA]</scope>
    <source>
        <strain>O157:H7 / Sakai / RIMD 0509952 / EHEC</strain>
    </source>
</reference>
<feature type="chain" id="PRO_0000174640" description="Succinylglutamate desuccinylase">
    <location>
        <begin position="1"/>
        <end position="322"/>
    </location>
</feature>
<feature type="active site" evidence="1">
    <location>
        <position position="210"/>
    </location>
</feature>
<feature type="binding site" evidence="1">
    <location>
        <position position="53"/>
    </location>
    <ligand>
        <name>Zn(2+)</name>
        <dbReference type="ChEBI" id="CHEBI:29105"/>
    </ligand>
</feature>
<feature type="binding site" evidence="1">
    <location>
        <position position="56"/>
    </location>
    <ligand>
        <name>Zn(2+)</name>
        <dbReference type="ChEBI" id="CHEBI:29105"/>
    </ligand>
</feature>
<feature type="binding site" evidence="1">
    <location>
        <position position="147"/>
    </location>
    <ligand>
        <name>Zn(2+)</name>
        <dbReference type="ChEBI" id="CHEBI:29105"/>
    </ligand>
</feature>
<keyword id="KW-0056">Arginine metabolism</keyword>
<keyword id="KW-0378">Hydrolase</keyword>
<keyword id="KW-0479">Metal-binding</keyword>
<keyword id="KW-1185">Reference proteome</keyword>
<keyword id="KW-0862">Zinc</keyword>
<organism>
    <name type="scientific">Escherichia coli O157:H7</name>
    <dbReference type="NCBI Taxonomy" id="83334"/>
    <lineage>
        <taxon>Bacteria</taxon>
        <taxon>Pseudomonadati</taxon>
        <taxon>Pseudomonadota</taxon>
        <taxon>Gammaproteobacteria</taxon>
        <taxon>Enterobacterales</taxon>
        <taxon>Enterobacteriaceae</taxon>
        <taxon>Escherichia</taxon>
    </lineage>
</organism>
<dbReference type="EC" id="3.5.1.96" evidence="1"/>
<dbReference type="EMBL" id="AE005174">
    <property type="protein sequence ID" value="AAG56730.1"/>
    <property type="molecule type" value="Genomic_DNA"/>
</dbReference>
<dbReference type="EMBL" id="BA000007">
    <property type="protein sequence ID" value="BAB35873.1"/>
    <property type="molecule type" value="Genomic_DNA"/>
</dbReference>
<dbReference type="PIR" id="B90935">
    <property type="entry name" value="B90935"/>
</dbReference>
<dbReference type="PIR" id="F85783">
    <property type="entry name" value="F85783"/>
</dbReference>
<dbReference type="RefSeq" id="NP_310477.1">
    <property type="nucleotide sequence ID" value="NC_002695.1"/>
</dbReference>
<dbReference type="RefSeq" id="WP_000368529.1">
    <property type="nucleotide sequence ID" value="NZ_VOAI01000007.1"/>
</dbReference>
<dbReference type="SMR" id="Q8XDZ0"/>
<dbReference type="STRING" id="155864.Z2776"/>
<dbReference type="GeneID" id="917119"/>
<dbReference type="KEGG" id="ece:Z2776"/>
<dbReference type="KEGG" id="ecs:ECs_2450"/>
<dbReference type="PATRIC" id="fig|386585.9.peg.2564"/>
<dbReference type="eggNOG" id="COG2988">
    <property type="taxonomic scope" value="Bacteria"/>
</dbReference>
<dbReference type="HOGENOM" id="CLU_071608_0_0_6"/>
<dbReference type="OMA" id="CAVHGNE"/>
<dbReference type="UniPathway" id="UPA00185">
    <property type="reaction ID" value="UER00283"/>
</dbReference>
<dbReference type="Proteomes" id="UP000000558">
    <property type="component" value="Chromosome"/>
</dbReference>
<dbReference type="Proteomes" id="UP000002519">
    <property type="component" value="Chromosome"/>
</dbReference>
<dbReference type="GO" id="GO:0016788">
    <property type="term" value="F:hydrolase activity, acting on ester bonds"/>
    <property type="evidence" value="ECO:0007669"/>
    <property type="project" value="UniProtKB-UniRule"/>
</dbReference>
<dbReference type="GO" id="GO:0009017">
    <property type="term" value="F:succinylglutamate desuccinylase activity"/>
    <property type="evidence" value="ECO:0007669"/>
    <property type="project" value="UniProtKB-EC"/>
</dbReference>
<dbReference type="GO" id="GO:0008270">
    <property type="term" value="F:zinc ion binding"/>
    <property type="evidence" value="ECO:0007669"/>
    <property type="project" value="UniProtKB-UniRule"/>
</dbReference>
<dbReference type="GO" id="GO:0019544">
    <property type="term" value="P:arginine catabolic process to glutamate"/>
    <property type="evidence" value="ECO:0007669"/>
    <property type="project" value="UniProtKB-UniRule"/>
</dbReference>
<dbReference type="GO" id="GO:0019545">
    <property type="term" value="P:arginine catabolic process to succinate"/>
    <property type="evidence" value="ECO:0007669"/>
    <property type="project" value="UniProtKB-UniRule"/>
</dbReference>
<dbReference type="CDD" id="cd03855">
    <property type="entry name" value="M14_ASTE"/>
    <property type="match status" value="1"/>
</dbReference>
<dbReference type="FunFam" id="3.40.630.10:FF:000017">
    <property type="entry name" value="Succinylglutamate desuccinylase"/>
    <property type="match status" value="1"/>
</dbReference>
<dbReference type="Gene3D" id="3.40.630.10">
    <property type="entry name" value="Zn peptidases"/>
    <property type="match status" value="1"/>
</dbReference>
<dbReference type="HAMAP" id="MF_00767">
    <property type="entry name" value="Arg_catab_AstE"/>
    <property type="match status" value="1"/>
</dbReference>
<dbReference type="InterPro" id="IPR050178">
    <property type="entry name" value="AspA/AstE_fam"/>
</dbReference>
<dbReference type="InterPro" id="IPR055438">
    <property type="entry name" value="AstE_AspA_cat"/>
</dbReference>
<dbReference type="InterPro" id="IPR007036">
    <property type="entry name" value="Aste_AspA_hybrid_dom"/>
</dbReference>
<dbReference type="InterPro" id="IPR016681">
    <property type="entry name" value="SuccinylGlu_desuccinylase"/>
</dbReference>
<dbReference type="NCBIfam" id="TIGR03242">
    <property type="entry name" value="arg_catab_astE"/>
    <property type="match status" value="1"/>
</dbReference>
<dbReference type="NCBIfam" id="NF003706">
    <property type="entry name" value="PRK05324.1"/>
    <property type="match status" value="1"/>
</dbReference>
<dbReference type="PANTHER" id="PTHR15162">
    <property type="entry name" value="ASPARTOACYLASE"/>
    <property type="match status" value="1"/>
</dbReference>
<dbReference type="PANTHER" id="PTHR15162:SF7">
    <property type="entry name" value="SUCCINYLGLUTAMATE DESUCCINYLASE"/>
    <property type="match status" value="1"/>
</dbReference>
<dbReference type="Pfam" id="PF24827">
    <property type="entry name" value="AstE_AspA_cat"/>
    <property type="match status" value="1"/>
</dbReference>
<dbReference type="Pfam" id="PF04952">
    <property type="entry name" value="AstE_AspA_hybrid"/>
    <property type="match status" value="1"/>
</dbReference>
<dbReference type="PIRSF" id="PIRSF017020">
    <property type="entry name" value="AstE"/>
    <property type="match status" value="1"/>
</dbReference>
<dbReference type="SUPFAM" id="SSF53187">
    <property type="entry name" value="Zn-dependent exopeptidases"/>
    <property type="match status" value="1"/>
</dbReference>
<proteinExistence type="inferred from homology"/>
<protein>
    <recommendedName>
        <fullName evidence="1">Succinylglutamate desuccinylase</fullName>
        <ecNumber evidence="1">3.5.1.96</ecNumber>
    </recommendedName>
</protein>
<accession>Q8XDZ0</accession>
<name>ASTE_ECO57</name>
<gene>
    <name evidence="1" type="primary">astE</name>
    <name type="ordered locus">Z2776</name>
    <name type="ordered locus">ECs2450</name>
</gene>